<organism>
    <name type="scientific">Mus musculus</name>
    <name type="common">Mouse</name>
    <dbReference type="NCBI Taxonomy" id="10090"/>
    <lineage>
        <taxon>Eukaryota</taxon>
        <taxon>Metazoa</taxon>
        <taxon>Chordata</taxon>
        <taxon>Craniata</taxon>
        <taxon>Vertebrata</taxon>
        <taxon>Euteleostomi</taxon>
        <taxon>Mammalia</taxon>
        <taxon>Eutheria</taxon>
        <taxon>Euarchontoglires</taxon>
        <taxon>Glires</taxon>
        <taxon>Rodentia</taxon>
        <taxon>Myomorpha</taxon>
        <taxon>Muroidea</taxon>
        <taxon>Muridae</taxon>
        <taxon>Murinae</taxon>
        <taxon>Mus</taxon>
        <taxon>Mus</taxon>
    </lineage>
</organism>
<sequence length="536" mass="59964">METMASPGKDNYRMKSYKNNALNPEEMRRRREEEGIQLRKQKREQQLFKRRNVELINEEAAMFDSLLMDSYVSSTTGESVITREMVEMLFSDDSDLQLATTQKFRKLLSKEPSPPIDEVINTPGVVDRFVEFLKRNENCTLQFEAAWALTNIASGTSQQTKIVIEAGAVPIFIELLNSDFEDVQEQAVWALGNIAGDSSLCRDYVLNCSILNPLLTLLTKSTRLTMTRNAVWALSNLCRGKNPPPEFAKVSPCLPVLSRLLFSSDSDLLADACWALSYLSDGPNEKIQAVIDSGVCRRLVELLMHNDYKVASPALRAVGNIVTGDDIQTQVILNCSALPCLLHLLSSSKESIRKEACWTISNITAGNRAQIQAVIDANIFPVLIEILQKAEFRTRKEAAWAITNATSGGTPEQIRYLVSLGCIKPLCDLLTVMDSKIVQVALNGLENILRLGEQESKRSGSGVNPYCGLIEEAYGLDKIEFLQSHENQEIYQKAFDLIEHYFGVEDDDSSLAPQVDETQQQFIFQQPEAPMEGFQL</sequence>
<proteinExistence type="evidence at protein level"/>
<protein>
    <recommendedName>
        <fullName>Importin subunit alpha-7</fullName>
    </recommendedName>
    <alternativeName>
        <fullName>Importin alpha-S2</fullName>
    </alternativeName>
    <alternativeName>
        <fullName>Karyopherin subunit alpha-6</fullName>
    </alternativeName>
</protein>
<reference key="1">
    <citation type="journal article" date="2005" name="Science">
        <title>The transcriptional landscape of the mammalian genome.</title>
        <authorList>
            <person name="Carninci P."/>
            <person name="Kasukawa T."/>
            <person name="Katayama S."/>
            <person name="Gough J."/>
            <person name="Frith M.C."/>
            <person name="Maeda N."/>
            <person name="Oyama R."/>
            <person name="Ravasi T."/>
            <person name="Lenhard B."/>
            <person name="Wells C."/>
            <person name="Kodzius R."/>
            <person name="Shimokawa K."/>
            <person name="Bajic V.B."/>
            <person name="Brenner S.E."/>
            <person name="Batalov S."/>
            <person name="Forrest A.R."/>
            <person name="Zavolan M."/>
            <person name="Davis M.J."/>
            <person name="Wilming L.G."/>
            <person name="Aidinis V."/>
            <person name="Allen J.E."/>
            <person name="Ambesi-Impiombato A."/>
            <person name="Apweiler R."/>
            <person name="Aturaliya R.N."/>
            <person name="Bailey T.L."/>
            <person name="Bansal M."/>
            <person name="Baxter L."/>
            <person name="Beisel K.W."/>
            <person name="Bersano T."/>
            <person name="Bono H."/>
            <person name="Chalk A.M."/>
            <person name="Chiu K.P."/>
            <person name="Choudhary V."/>
            <person name="Christoffels A."/>
            <person name="Clutterbuck D.R."/>
            <person name="Crowe M.L."/>
            <person name="Dalla E."/>
            <person name="Dalrymple B.P."/>
            <person name="de Bono B."/>
            <person name="Della Gatta G."/>
            <person name="di Bernardo D."/>
            <person name="Down T."/>
            <person name="Engstrom P."/>
            <person name="Fagiolini M."/>
            <person name="Faulkner G."/>
            <person name="Fletcher C.F."/>
            <person name="Fukushima T."/>
            <person name="Furuno M."/>
            <person name="Futaki S."/>
            <person name="Gariboldi M."/>
            <person name="Georgii-Hemming P."/>
            <person name="Gingeras T.R."/>
            <person name="Gojobori T."/>
            <person name="Green R.E."/>
            <person name="Gustincich S."/>
            <person name="Harbers M."/>
            <person name="Hayashi Y."/>
            <person name="Hensch T.K."/>
            <person name="Hirokawa N."/>
            <person name="Hill D."/>
            <person name="Huminiecki L."/>
            <person name="Iacono M."/>
            <person name="Ikeo K."/>
            <person name="Iwama A."/>
            <person name="Ishikawa T."/>
            <person name="Jakt M."/>
            <person name="Kanapin A."/>
            <person name="Katoh M."/>
            <person name="Kawasawa Y."/>
            <person name="Kelso J."/>
            <person name="Kitamura H."/>
            <person name="Kitano H."/>
            <person name="Kollias G."/>
            <person name="Krishnan S.P."/>
            <person name="Kruger A."/>
            <person name="Kummerfeld S.K."/>
            <person name="Kurochkin I.V."/>
            <person name="Lareau L.F."/>
            <person name="Lazarevic D."/>
            <person name="Lipovich L."/>
            <person name="Liu J."/>
            <person name="Liuni S."/>
            <person name="McWilliam S."/>
            <person name="Madan Babu M."/>
            <person name="Madera M."/>
            <person name="Marchionni L."/>
            <person name="Matsuda H."/>
            <person name="Matsuzawa S."/>
            <person name="Miki H."/>
            <person name="Mignone F."/>
            <person name="Miyake S."/>
            <person name="Morris K."/>
            <person name="Mottagui-Tabar S."/>
            <person name="Mulder N."/>
            <person name="Nakano N."/>
            <person name="Nakauchi H."/>
            <person name="Ng P."/>
            <person name="Nilsson R."/>
            <person name="Nishiguchi S."/>
            <person name="Nishikawa S."/>
            <person name="Nori F."/>
            <person name="Ohara O."/>
            <person name="Okazaki Y."/>
            <person name="Orlando V."/>
            <person name="Pang K.C."/>
            <person name="Pavan W.J."/>
            <person name="Pavesi G."/>
            <person name="Pesole G."/>
            <person name="Petrovsky N."/>
            <person name="Piazza S."/>
            <person name="Reed J."/>
            <person name="Reid J.F."/>
            <person name="Ring B.Z."/>
            <person name="Ringwald M."/>
            <person name="Rost B."/>
            <person name="Ruan Y."/>
            <person name="Salzberg S.L."/>
            <person name="Sandelin A."/>
            <person name="Schneider C."/>
            <person name="Schoenbach C."/>
            <person name="Sekiguchi K."/>
            <person name="Semple C.A."/>
            <person name="Seno S."/>
            <person name="Sessa L."/>
            <person name="Sheng Y."/>
            <person name="Shibata Y."/>
            <person name="Shimada H."/>
            <person name="Shimada K."/>
            <person name="Silva D."/>
            <person name="Sinclair B."/>
            <person name="Sperling S."/>
            <person name="Stupka E."/>
            <person name="Sugiura K."/>
            <person name="Sultana R."/>
            <person name="Takenaka Y."/>
            <person name="Taki K."/>
            <person name="Tammoja K."/>
            <person name="Tan S.L."/>
            <person name="Tang S."/>
            <person name="Taylor M.S."/>
            <person name="Tegner J."/>
            <person name="Teichmann S.A."/>
            <person name="Ueda H.R."/>
            <person name="van Nimwegen E."/>
            <person name="Verardo R."/>
            <person name="Wei C.L."/>
            <person name="Yagi K."/>
            <person name="Yamanishi H."/>
            <person name="Zabarovsky E."/>
            <person name="Zhu S."/>
            <person name="Zimmer A."/>
            <person name="Hide W."/>
            <person name="Bult C."/>
            <person name="Grimmond S.M."/>
            <person name="Teasdale R.D."/>
            <person name="Liu E.T."/>
            <person name="Brusic V."/>
            <person name="Quackenbush J."/>
            <person name="Wahlestedt C."/>
            <person name="Mattick J.S."/>
            <person name="Hume D.A."/>
            <person name="Kai C."/>
            <person name="Sasaki D."/>
            <person name="Tomaru Y."/>
            <person name="Fukuda S."/>
            <person name="Kanamori-Katayama M."/>
            <person name="Suzuki M."/>
            <person name="Aoki J."/>
            <person name="Arakawa T."/>
            <person name="Iida J."/>
            <person name="Imamura K."/>
            <person name="Itoh M."/>
            <person name="Kato T."/>
            <person name="Kawaji H."/>
            <person name="Kawagashira N."/>
            <person name="Kawashima T."/>
            <person name="Kojima M."/>
            <person name="Kondo S."/>
            <person name="Konno H."/>
            <person name="Nakano K."/>
            <person name="Ninomiya N."/>
            <person name="Nishio T."/>
            <person name="Okada M."/>
            <person name="Plessy C."/>
            <person name="Shibata K."/>
            <person name="Shiraki T."/>
            <person name="Suzuki S."/>
            <person name="Tagami M."/>
            <person name="Waki K."/>
            <person name="Watahiki A."/>
            <person name="Okamura-Oho Y."/>
            <person name="Suzuki H."/>
            <person name="Kawai J."/>
            <person name="Hayashizaki Y."/>
        </authorList>
    </citation>
    <scope>NUCLEOTIDE SEQUENCE [LARGE SCALE MRNA]</scope>
    <source>
        <strain>C57BL/6J</strain>
        <strain>NOD</strain>
        <tissue>Testis</tissue>
    </source>
</reference>
<reference key="2">
    <citation type="journal article" date="2004" name="Genome Res.">
        <title>The status, quality, and expansion of the NIH full-length cDNA project: the Mammalian Gene Collection (MGC).</title>
        <authorList>
            <consortium name="The MGC Project Team"/>
        </authorList>
    </citation>
    <scope>NUCLEOTIDE SEQUENCE [LARGE SCALE MRNA]</scope>
</reference>
<reference key="3">
    <citation type="journal article" date="1997" name="FEBS Lett.">
        <title>Identification of novel homologues of mouse importin alpha, the alpha subunit of the nuclear pore-targeting complex, and their tissue-specific expression.</title>
        <authorList>
            <person name="Tsuji L."/>
            <person name="Takumi T."/>
            <person name="Imamoto N."/>
            <person name="Yoneda Y."/>
        </authorList>
    </citation>
    <scope>NUCLEOTIDE SEQUENCE [MRNA] OF 4-536</scope>
</reference>
<reference key="4">
    <citation type="journal article" date="2008" name="Hum. Mol. Genet.">
        <title>Functional and structural basis of the nuclear localization signal in the ZIC3 zinc finger domain.</title>
        <authorList>
            <person name="Hatayama M."/>
            <person name="Tomizawa T."/>
            <person name="Sakai-Kato K."/>
            <person name="Bouvagnet P."/>
            <person name="Kose S."/>
            <person name="Imamoto N."/>
            <person name="Yokoyama S."/>
            <person name="Utsunomiya-Tate N."/>
            <person name="Mikoshiba K."/>
            <person name="Kigawa T."/>
            <person name="Aruga J."/>
        </authorList>
    </citation>
    <scope>INTERACTION WITH ZIC3</scope>
</reference>
<reference key="5">
    <citation type="journal article" date="2010" name="Cell">
        <title>A tissue-specific atlas of mouse protein phosphorylation and expression.</title>
        <authorList>
            <person name="Huttlin E.L."/>
            <person name="Jedrychowski M.P."/>
            <person name="Elias J.E."/>
            <person name="Goswami T."/>
            <person name="Rad R."/>
            <person name="Beausoleil S.A."/>
            <person name="Villen J."/>
            <person name="Haas W."/>
            <person name="Sowa M.E."/>
            <person name="Gygi S.P."/>
        </authorList>
    </citation>
    <scope>IDENTIFICATION BY MASS SPECTROMETRY [LARGE SCALE ANALYSIS]</scope>
    <source>
        <tissue>Brain</tissue>
        <tissue>Brown adipose tissue</tissue>
        <tissue>Kidney</tissue>
        <tissue>Lung</tissue>
        <tissue>Spleen</tissue>
        <tissue>Testis</tissue>
    </source>
</reference>
<keyword id="KW-0007">Acetylation</keyword>
<keyword id="KW-0963">Cytoplasm</keyword>
<keyword id="KW-0597">Phosphoprotein</keyword>
<keyword id="KW-0653">Protein transport</keyword>
<keyword id="KW-1185">Reference proteome</keyword>
<keyword id="KW-0677">Repeat</keyword>
<keyword id="KW-0813">Transport</keyword>
<feature type="chain" id="PRO_0000120730" description="Importin subunit alpha-7">
    <location>
        <begin position="1"/>
        <end position="536"/>
    </location>
</feature>
<feature type="domain" description="IBB" evidence="3">
    <location>
        <begin position="1"/>
        <end position="60"/>
    </location>
</feature>
<feature type="repeat" description="ARM 1; truncated">
    <location>
        <begin position="76"/>
        <end position="115"/>
    </location>
</feature>
<feature type="repeat" description="ARM 2">
    <location>
        <begin position="116"/>
        <end position="159"/>
    </location>
</feature>
<feature type="repeat" description="ARM 3">
    <location>
        <begin position="160"/>
        <end position="204"/>
    </location>
</feature>
<feature type="repeat" description="ARM 4">
    <location>
        <begin position="205"/>
        <end position="243"/>
    </location>
</feature>
<feature type="repeat" description="ARM 5">
    <location>
        <begin position="244"/>
        <end position="288"/>
    </location>
</feature>
<feature type="repeat" description="ARM 6">
    <location>
        <begin position="289"/>
        <end position="328"/>
    </location>
</feature>
<feature type="repeat" description="ARM 7">
    <location>
        <begin position="329"/>
        <end position="370"/>
    </location>
</feature>
<feature type="repeat" description="ARM 8">
    <location>
        <begin position="371"/>
        <end position="410"/>
    </location>
</feature>
<feature type="repeat" description="ARM 9">
    <location>
        <begin position="411"/>
        <end position="453"/>
    </location>
</feature>
<feature type="repeat" description="ARM 10; atypical">
    <location>
        <begin position="457"/>
        <end position="502"/>
    </location>
</feature>
<feature type="region of interest" description="Disordered" evidence="4">
    <location>
        <begin position="1"/>
        <end position="29"/>
    </location>
</feature>
<feature type="region of interest" description="NLS binding site (major)" evidence="1">
    <location>
        <begin position="147"/>
        <end position="239"/>
    </location>
</feature>
<feature type="region of interest" description="NLS binding site (minor)" evidence="1">
    <location>
        <begin position="316"/>
        <end position="404"/>
    </location>
</feature>
<feature type="short sequence motif" description="Nuclear localization signal" evidence="1">
    <location>
        <begin position="45"/>
        <end position="54"/>
    </location>
</feature>
<feature type="modified residue" description="N-acetylmethionine" evidence="2">
    <location>
        <position position="1"/>
    </location>
</feature>
<feature type="modified residue" description="Phosphoserine" evidence="2">
    <location>
        <position position="6"/>
    </location>
</feature>
<feature type="modified residue" description="Phosphoserine" evidence="2">
    <location>
        <position position="113"/>
    </location>
</feature>
<feature type="sequence conflict" description="In Ref. 1; BAE32900." evidence="6" ref="1">
    <original>V</original>
    <variation>E</variation>
    <location>
        <position position="86"/>
    </location>
</feature>
<feature type="sequence conflict" description="In Ref. 1; BAE32900." evidence="6" ref="1">
    <original>S</original>
    <variation>A</variation>
    <location>
        <position position="280"/>
    </location>
</feature>
<feature type="sequence conflict" description="In Ref. 1; BAB24841." evidence="6" ref="1">
    <original>S</original>
    <variation>T</variation>
    <location>
        <position position="435"/>
    </location>
</feature>
<comment type="function">
    <text>Functions in nuclear protein import as an adapter protein for nuclear receptor KPNB1. Binds specifically and directly to substrates containing either a simple or bipartite NLS motif. Docking of the importin/substrate complex to the nuclear pore complex (NPC) is mediated by KPNB1 through binding to nucleoporin FxFG repeats and the complex is subsequently translocated through the pore by an energy requiring, Ran-dependent mechanism. At the nucleoplasmic side of the NPC, Ran binds to importin-beta and the three components separate and importin-alpha and -beta are re-exported from the nucleus to the cytoplasm where GTP hydrolysis releases Ran from importin. The directionality of nuclear import is thought to be conferred by an asymmetric distribution of the GTP- and GDP-bound forms of Ran between the cytoplasm and nucleus.</text>
</comment>
<comment type="subunit">
    <text evidence="1 5">Forms a complex with importin subunit beta-1 (By similarity). Interacts with ZIC3.</text>
</comment>
<comment type="subcellular location">
    <subcellularLocation>
        <location>Cytoplasm</location>
    </subcellularLocation>
</comment>
<comment type="tissue specificity">
    <text>Only slightly detected in Ehrlich ascites tumor cells, thymus and skeletal muscle, clearly detected in kidney, spleen, liver, heart, and lung. High expression in testis.</text>
</comment>
<comment type="domain">
    <text>Consists of an N-terminal hydrophilic region, a hydrophobic central region composed of 10 repeats, and a short hydrophilic C-terminus. The N-terminal hydrophilic region contains the importin beta binding domain (IBB domain), which is sufficient for binding importin beta and essential for nuclear protein import.</text>
</comment>
<comment type="domain">
    <text evidence="1">The IBB domain is thought to act as an intrasteric autoregulatory sequence by interacting with the internal autoinhibitory NLS. Binding of KPNB1 probably overlaps the internal NLS and contributes to a high affinity for cytoplasmic NLS-containing cargo substrates. After dissociation of the importin/substrate complex in the nucleus the internal autohibitory NLS contributes to a low affinity for nuclear NLS-containing proteins (By similarity).</text>
</comment>
<comment type="domain">
    <text evidence="1">The major and minor NLS binding sites are mainly involved in recognition of simple or bipartite NLS motifs. Structurally located within in a helical surface groove they contain several conserved Trp and Asn residues of the corresponding third helices (H3) of ARM repeats which mainly contribute to binding (By similarity).</text>
</comment>
<comment type="similarity">
    <text evidence="6">Belongs to the importin alpha family.</text>
</comment>
<gene>
    <name type="primary">Kpna6</name>
    <name type="synonym">Kpna5</name>
</gene>
<name>IMA7_MOUSE</name>
<accession>O35345</accession>
<accession>Q3U388</accession>
<accession>Q9CVP9</accession>
<evidence type="ECO:0000250" key="1"/>
<evidence type="ECO:0000250" key="2">
    <source>
        <dbReference type="UniProtKB" id="O60684"/>
    </source>
</evidence>
<evidence type="ECO:0000255" key="3">
    <source>
        <dbReference type="PROSITE-ProRule" id="PRU00561"/>
    </source>
</evidence>
<evidence type="ECO:0000256" key="4">
    <source>
        <dbReference type="SAM" id="MobiDB-lite"/>
    </source>
</evidence>
<evidence type="ECO:0000269" key="5">
    <source>
    </source>
</evidence>
<evidence type="ECO:0000305" key="6"/>
<dbReference type="EMBL" id="AK007053">
    <property type="protein sequence ID" value="BAB24841.1"/>
    <property type="molecule type" value="mRNA"/>
</dbReference>
<dbReference type="EMBL" id="AK154882">
    <property type="protein sequence ID" value="BAE32900.1"/>
    <property type="molecule type" value="mRNA"/>
</dbReference>
<dbReference type="EMBL" id="BC004833">
    <property type="protein sequence ID" value="AAH04833.2"/>
    <property type="molecule type" value="mRNA"/>
</dbReference>
<dbReference type="EMBL" id="AF020773">
    <property type="protein sequence ID" value="AAC53373.1"/>
    <property type="molecule type" value="mRNA"/>
</dbReference>
<dbReference type="CCDS" id="CCDS18701.1"/>
<dbReference type="RefSeq" id="NP_032494.3">
    <property type="nucleotide sequence ID" value="NM_008468.4"/>
</dbReference>
<dbReference type="SMR" id="O35345"/>
<dbReference type="BioGRID" id="201010">
    <property type="interactions" value="9"/>
</dbReference>
<dbReference type="ComplexPortal" id="CPX-1065">
    <property type="entry name" value="Importin complex, KPNA6 variant"/>
</dbReference>
<dbReference type="DIP" id="DIP-48616N"/>
<dbReference type="FunCoup" id="O35345">
    <property type="interactions" value="3573"/>
</dbReference>
<dbReference type="IntAct" id="O35345">
    <property type="interactions" value="2"/>
</dbReference>
<dbReference type="STRING" id="10090.ENSMUSP00000099650"/>
<dbReference type="GlyGen" id="O35345">
    <property type="glycosylation" value="2 sites, 1 N-linked glycan (1 site), 1 O-linked glycan (1 site)"/>
</dbReference>
<dbReference type="iPTMnet" id="O35345"/>
<dbReference type="PhosphoSitePlus" id="O35345"/>
<dbReference type="jPOST" id="O35345"/>
<dbReference type="PaxDb" id="10090-ENSMUSP00000099650"/>
<dbReference type="PeptideAtlas" id="O35345"/>
<dbReference type="ProteomicsDB" id="267241"/>
<dbReference type="Pumba" id="O35345"/>
<dbReference type="Antibodypedia" id="16877">
    <property type="antibodies" value="175 antibodies from 33 providers"/>
</dbReference>
<dbReference type="DNASU" id="16650"/>
<dbReference type="Ensembl" id="ENSMUST00000102590.11">
    <property type="protein sequence ID" value="ENSMUSP00000099650.5"/>
    <property type="gene ID" value="ENSMUSG00000003731.14"/>
</dbReference>
<dbReference type="GeneID" id="16650"/>
<dbReference type="KEGG" id="mmu:16650"/>
<dbReference type="UCSC" id="uc008uxz.2">
    <property type="organism name" value="mouse"/>
</dbReference>
<dbReference type="AGR" id="MGI:1100836"/>
<dbReference type="CTD" id="23633"/>
<dbReference type="MGI" id="MGI:1100836">
    <property type="gene designation" value="Kpna6"/>
</dbReference>
<dbReference type="VEuPathDB" id="HostDB:ENSMUSG00000003731"/>
<dbReference type="eggNOG" id="KOG0166">
    <property type="taxonomic scope" value="Eukaryota"/>
</dbReference>
<dbReference type="GeneTree" id="ENSGT01050000244950"/>
<dbReference type="InParanoid" id="O35345"/>
<dbReference type="OMA" id="EMIQMLY"/>
<dbReference type="OrthoDB" id="29145at2759"/>
<dbReference type="PhylomeDB" id="O35345"/>
<dbReference type="TreeFam" id="TF354205"/>
<dbReference type="Reactome" id="R-MMU-68616">
    <property type="pathway name" value="Assembly of the ORC complex at the origin of replication"/>
</dbReference>
<dbReference type="BioGRID-ORCS" id="16650">
    <property type="hits" value="2 hits in 75 CRISPR screens"/>
</dbReference>
<dbReference type="ChiTaRS" id="Kpna6">
    <property type="organism name" value="mouse"/>
</dbReference>
<dbReference type="PRO" id="PR:O35345"/>
<dbReference type="Proteomes" id="UP000000589">
    <property type="component" value="Chromosome 4"/>
</dbReference>
<dbReference type="RNAct" id="O35345">
    <property type="molecule type" value="protein"/>
</dbReference>
<dbReference type="Bgee" id="ENSMUSG00000003731">
    <property type="expression patterns" value="Expressed in spermatid and 262 other cell types or tissues"/>
</dbReference>
<dbReference type="ExpressionAtlas" id="O35345">
    <property type="expression patterns" value="baseline and differential"/>
</dbReference>
<dbReference type="GO" id="GO:0005829">
    <property type="term" value="C:cytosol"/>
    <property type="evidence" value="ECO:0000303"/>
    <property type="project" value="ComplexPortal"/>
</dbReference>
<dbReference type="GO" id="GO:0043657">
    <property type="term" value="C:host cell"/>
    <property type="evidence" value="ECO:0007669"/>
    <property type="project" value="GOC"/>
</dbReference>
<dbReference type="GO" id="GO:0042564">
    <property type="term" value="C:NLS-dependent protein nuclear import complex"/>
    <property type="evidence" value="ECO:0000266"/>
    <property type="project" value="ComplexPortal"/>
</dbReference>
<dbReference type="GO" id="GO:0005654">
    <property type="term" value="C:nucleoplasm"/>
    <property type="evidence" value="ECO:0000303"/>
    <property type="project" value="ComplexPortal"/>
</dbReference>
<dbReference type="GO" id="GO:0061608">
    <property type="term" value="F:nuclear import signal receptor activity"/>
    <property type="evidence" value="ECO:0000314"/>
    <property type="project" value="MGI"/>
</dbReference>
<dbReference type="GO" id="GO:0075506">
    <property type="term" value="P:entry of viral genome into host nucleus through nuclear pore complex via importin"/>
    <property type="evidence" value="ECO:0000315"/>
    <property type="project" value="MGI"/>
</dbReference>
<dbReference type="GO" id="GO:0060135">
    <property type="term" value="P:maternal process involved in female pregnancy"/>
    <property type="evidence" value="ECO:0000315"/>
    <property type="project" value="MGI"/>
</dbReference>
<dbReference type="GO" id="GO:1900017">
    <property type="term" value="P:positive regulation of cytokine production involved in inflammatory response"/>
    <property type="evidence" value="ECO:0000315"/>
    <property type="project" value="MGI"/>
</dbReference>
<dbReference type="GO" id="GO:0045944">
    <property type="term" value="P:positive regulation of transcription by RNA polymerase II"/>
    <property type="evidence" value="ECO:0000315"/>
    <property type="project" value="MGI"/>
</dbReference>
<dbReference type="GO" id="GO:1903902">
    <property type="term" value="P:positive regulation of viral life cycle"/>
    <property type="evidence" value="ECO:0000315"/>
    <property type="project" value="MGI"/>
</dbReference>
<dbReference type="GO" id="GO:0006606">
    <property type="term" value="P:protein import into nucleus"/>
    <property type="evidence" value="ECO:0000314"/>
    <property type="project" value="MGI"/>
</dbReference>
<dbReference type="GO" id="GO:0030682">
    <property type="term" value="P:symbiont-mediated perturbation of host defenses"/>
    <property type="evidence" value="ECO:0000315"/>
    <property type="project" value="MGI"/>
</dbReference>
<dbReference type="GO" id="GO:0006366">
    <property type="term" value="P:transcription by RNA polymerase II"/>
    <property type="evidence" value="ECO:0000315"/>
    <property type="project" value="MGI"/>
</dbReference>
<dbReference type="GO" id="GO:0019079">
    <property type="term" value="P:viral genome replication"/>
    <property type="evidence" value="ECO:0000315"/>
    <property type="project" value="MGI"/>
</dbReference>
<dbReference type="FunFam" id="1.20.5.690:FF:000001">
    <property type="entry name" value="Importin subunit alpha"/>
    <property type="match status" value="1"/>
</dbReference>
<dbReference type="FunFam" id="1.25.10.10:FF:000013">
    <property type="entry name" value="Importin subunit alpha"/>
    <property type="match status" value="1"/>
</dbReference>
<dbReference type="Gene3D" id="1.20.5.690">
    <property type="entry name" value="Importin-alpha, importin-beta-binding domain"/>
    <property type="match status" value="1"/>
</dbReference>
<dbReference type="Gene3D" id="1.25.10.10">
    <property type="entry name" value="Leucine-rich Repeat Variant"/>
    <property type="match status" value="1"/>
</dbReference>
<dbReference type="InterPro" id="IPR011989">
    <property type="entry name" value="ARM-like"/>
</dbReference>
<dbReference type="InterPro" id="IPR016024">
    <property type="entry name" value="ARM-type_fold"/>
</dbReference>
<dbReference type="InterPro" id="IPR032413">
    <property type="entry name" value="Arm_3"/>
</dbReference>
<dbReference type="InterPro" id="IPR000225">
    <property type="entry name" value="Armadillo"/>
</dbReference>
<dbReference type="InterPro" id="IPR002652">
    <property type="entry name" value="Importin-a_IBB"/>
</dbReference>
<dbReference type="InterPro" id="IPR036975">
    <property type="entry name" value="Importin-a_IBB_sf"/>
</dbReference>
<dbReference type="InterPro" id="IPR024931">
    <property type="entry name" value="Importin_alpha"/>
</dbReference>
<dbReference type="PANTHER" id="PTHR23316">
    <property type="entry name" value="IMPORTIN ALPHA"/>
    <property type="match status" value="1"/>
</dbReference>
<dbReference type="Pfam" id="PF00514">
    <property type="entry name" value="Arm"/>
    <property type="match status" value="8"/>
</dbReference>
<dbReference type="Pfam" id="PF16186">
    <property type="entry name" value="Arm_3"/>
    <property type="match status" value="1"/>
</dbReference>
<dbReference type="Pfam" id="PF01749">
    <property type="entry name" value="IBB"/>
    <property type="match status" value="1"/>
</dbReference>
<dbReference type="PIRSF" id="PIRSF005673">
    <property type="entry name" value="Importin_alpha"/>
    <property type="match status" value="1"/>
</dbReference>
<dbReference type="SMART" id="SM00185">
    <property type="entry name" value="ARM"/>
    <property type="match status" value="8"/>
</dbReference>
<dbReference type="SUPFAM" id="SSF48371">
    <property type="entry name" value="ARM repeat"/>
    <property type="match status" value="1"/>
</dbReference>
<dbReference type="PROSITE" id="PS50176">
    <property type="entry name" value="ARM_REPEAT"/>
    <property type="match status" value="2"/>
</dbReference>
<dbReference type="PROSITE" id="PS51214">
    <property type="entry name" value="IBB"/>
    <property type="match status" value="1"/>
</dbReference>